<keyword id="KW-0002">3D-structure</keyword>
<keyword id="KW-0145">Chemotaxis</keyword>
<keyword id="KW-0202">Cytokine</keyword>
<keyword id="KW-1015">Disulfide bond</keyword>
<keyword id="KW-0395">Inflammatory response</keyword>
<keyword id="KW-1267">Proteomics identification</keyword>
<keyword id="KW-1185">Reference proteome</keyword>
<keyword id="KW-0964">Secreted</keyword>
<keyword id="KW-0732">Signal</keyword>
<gene>
    <name type="primary">CXCL13</name>
    <name type="synonym">BCA1</name>
    <name type="synonym">BLC</name>
    <name type="synonym">SCYB13</name>
</gene>
<name>CXL13_HUMAN</name>
<protein>
    <recommendedName>
        <fullName>C-X-C motif chemokine 13</fullName>
    </recommendedName>
    <alternativeName>
        <fullName>Angie</fullName>
    </alternativeName>
    <alternativeName>
        <fullName>B cell-attracting chemokine 1</fullName>
        <shortName>BCA-1</shortName>
    </alternativeName>
    <alternativeName>
        <fullName>B lymphocyte chemoattractant</fullName>
    </alternativeName>
    <alternativeName>
        <fullName>CXC chemokine BLC</fullName>
    </alternativeName>
    <alternativeName>
        <fullName>Small-inducible cytokine B13</fullName>
    </alternativeName>
</protein>
<accession>O43927</accession>
<sequence length="109" mass="12664">MKFISTSLLLMLLVSSLSPVQGVLEVYYTSLRCRCVQESSVFIPRRFIDRIQILPRGNGCPRKEIIVWKKNKSIVCVDPQAEWIQRMMEVLRKRSSSTLPVPVFKRKIP</sequence>
<comment type="function">
    <text>Chemotactic for B-lymphocytes but not for T-lymphocytes, monocytes and neutrophils. Does not induce calcium release in B-lymphocytes. Binds to BLR1/CXCR5.</text>
</comment>
<comment type="subcellular location">
    <subcellularLocation>
        <location>Secreted</location>
    </subcellularLocation>
</comment>
<comment type="tissue specificity">
    <text>Highest levels in liver, followed by spleen, lymph node, appendix and stomach. Low levels in salivary gland, mammary gland and fetal spleen.</text>
</comment>
<comment type="similarity">
    <text evidence="3">Belongs to the intercrine alpha (chemokine CxC) family.</text>
</comment>
<comment type="online information" name="Wikipedia">
    <link uri="https://en.wikipedia.org/wiki/CXCL13"/>
    <text>CXCL13 entry</text>
</comment>
<evidence type="ECO:0000250" key="1"/>
<evidence type="ECO:0000255" key="2"/>
<evidence type="ECO:0000305" key="3"/>
<evidence type="ECO:0007829" key="4">
    <source>
        <dbReference type="PDB" id="5CBE"/>
    </source>
</evidence>
<evidence type="ECO:0007829" key="5">
    <source>
        <dbReference type="PDB" id="6VGJ"/>
    </source>
</evidence>
<evidence type="ECO:0007829" key="6">
    <source>
        <dbReference type="PDB" id="7JNY"/>
    </source>
</evidence>
<organism>
    <name type="scientific">Homo sapiens</name>
    <name type="common">Human</name>
    <dbReference type="NCBI Taxonomy" id="9606"/>
    <lineage>
        <taxon>Eukaryota</taxon>
        <taxon>Metazoa</taxon>
        <taxon>Chordata</taxon>
        <taxon>Craniata</taxon>
        <taxon>Vertebrata</taxon>
        <taxon>Euteleostomi</taxon>
        <taxon>Mammalia</taxon>
        <taxon>Eutheria</taxon>
        <taxon>Euarchontoglires</taxon>
        <taxon>Primates</taxon>
        <taxon>Haplorrhini</taxon>
        <taxon>Catarrhini</taxon>
        <taxon>Hominidae</taxon>
        <taxon>Homo</taxon>
    </lineage>
</organism>
<feature type="signal peptide" evidence="2">
    <location>
        <begin position="1"/>
        <end position="22"/>
    </location>
</feature>
<feature type="chain" id="PRO_0000005113" description="C-X-C motif chemokine 13">
    <location>
        <begin position="23"/>
        <end position="109"/>
    </location>
</feature>
<feature type="disulfide bond" evidence="1">
    <location>
        <begin position="33"/>
        <end position="60"/>
    </location>
</feature>
<feature type="disulfide bond" evidence="1">
    <location>
        <begin position="35"/>
        <end position="76"/>
    </location>
</feature>
<feature type="strand" evidence="6">
    <location>
        <begin position="23"/>
        <end position="26"/>
    </location>
</feature>
<feature type="strand" evidence="4">
    <location>
        <begin position="35"/>
        <end position="37"/>
    </location>
</feature>
<feature type="helix" evidence="6">
    <location>
        <begin position="45"/>
        <end position="47"/>
    </location>
</feature>
<feature type="strand" evidence="6">
    <location>
        <begin position="48"/>
        <end position="54"/>
    </location>
</feature>
<feature type="strand" evidence="5">
    <location>
        <begin position="56"/>
        <end position="58"/>
    </location>
</feature>
<feature type="strand" evidence="4">
    <location>
        <begin position="60"/>
        <end position="62"/>
    </location>
</feature>
<feature type="strand" evidence="6">
    <location>
        <begin position="64"/>
        <end position="69"/>
    </location>
</feature>
<feature type="strand" evidence="6">
    <location>
        <begin position="74"/>
        <end position="77"/>
    </location>
</feature>
<feature type="helix" evidence="6">
    <location>
        <begin position="82"/>
        <end position="93"/>
    </location>
</feature>
<feature type="turn" evidence="5">
    <location>
        <begin position="95"/>
        <end position="97"/>
    </location>
</feature>
<proteinExistence type="evidence at protein level"/>
<reference key="1">
    <citation type="journal article" date="1998" name="Nature">
        <title>A B-cell-homing chemokine made in lymphoid follicles activates Burkitt's lymphoma receptor-1.</title>
        <authorList>
            <person name="Gunn M.D."/>
            <person name="Ngo V.N."/>
            <person name="Ansel K.M."/>
            <person name="Ekland E.H."/>
            <person name="Cyster J.G."/>
            <person name="Williams L.T."/>
        </authorList>
    </citation>
    <scope>NUCLEOTIDE SEQUENCE [MRNA]</scope>
</reference>
<reference key="2">
    <citation type="journal article" date="1998" name="J. Exp. Med.">
        <title>B cell-attracting chemokine 1, a human CXC chemokine expressed in lymphoid tissues, selectively attracts B lymphocytes via BLR1/CXCR5.</title>
        <authorList>
            <person name="Legler D.F."/>
            <person name="Loetscher M."/>
            <person name="Stuber Roos R."/>
            <person name="Clark-Lewis I."/>
            <person name="Baggiolini M."/>
            <person name="Moser B."/>
        </authorList>
    </citation>
    <scope>NUCLEOTIDE SEQUENCE [MRNA]</scope>
    <source>
        <tissue>Peripheral blood leukocyte</tissue>
    </source>
</reference>
<reference key="3">
    <citation type="submission" date="1997-10" db="EMBL/GenBank/DDBJ databases">
        <authorList>
            <person name="Napolitano M."/>
            <person name="Spinetti G."/>
            <person name="Gaetano C."/>
            <person name="Capogrossi C.M."/>
        </authorList>
    </citation>
    <scope>NUCLEOTIDE SEQUENCE [MRNA]</scope>
    <source>
        <tissue>Peripheral blood</tissue>
    </source>
</reference>
<reference key="4">
    <citation type="journal article" date="2004" name="Genome Res.">
        <title>The status, quality, and expansion of the NIH full-length cDNA project: the Mammalian Gene Collection (MGC).</title>
        <authorList>
            <consortium name="The MGC Project Team"/>
        </authorList>
    </citation>
    <scope>NUCLEOTIDE SEQUENCE [LARGE SCALE MRNA]</scope>
    <source>
        <tissue>Skeletal muscle</tissue>
    </source>
</reference>
<dbReference type="EMBL" id="AF044197">
    <property type="protein sequence ID" value="AAC14402.1"/>
    <property type="molecule type" value="mRNA"/>
</dbReference>
<dbReference type="EMBL" id="AJ002211">
    <property type="protein sequence ID" value="CAA05250.1"/>
    <property type="molecule type" value="mRNA"/>
</dbReference>
<dbReference type="EMBL" id="AF029894">
    <property type="protein sequence ID" value="AAC17980.1"/>
    <property type="molecule type" value="mRNA"/>
</dbReference>
<dbReference type="EMBL" id="BC012589">
    <property type="protein sequence ID" value="AAH12589.1"/>
    <property type="molecule type" value="mRNA"/>
</dbReference>
<dbReference type="CCDS" id="CCDS3582.1"/>
<dbReference type="RefSeq" id="NP_001358487.1">
    <property type="nucleotide sequence ID" value="NM_001371558.1"/>
</dbReference>
<dbReference type="RefSeq" id="NP_006410.1">
    <property type="nucleotide sequence ID" value="NM_006419.3"/>
</dbReference>
<dbReference type="RefSeq" id="XP_006714126.1">
    <property type="nucleotide sequence ID" value="XM_006714063.3"/>
</dbReference>
<dbReference type="PDB" id="5CBA">
    <property type="method" value="X-ray"/>
    <property type="resolution" value="2.50 A"/>
    <property type="chains" value="E/F=23-109"/>
</dbReference>
<dbReference type="PDB" id="5CBE">
    <property type="method" value="X-ray"/>
    <property type="resolution" value="2.40 A"/>
    <property type="chains" value="E/F=23-109"/>
</dbReference>
<dbReference type="PDB" id="6VGJ">
    <property type="method" value="X-ray"/>
    <property type="resolution" value="2.52 A"/>
    <property type="chains" value="A/B/C/D/E/F/G=24-109"/>
</dbReference>
<dbReference type="PDB" id="7JNY">
    <property type="method" value="X-ray"/>
    <property type="resolution" value="1.88 A"/>
    <property type="chains" value="A=23-109"/>
</dbReference>
<dbReference type="PDBsum" id="5CBA"/>
<dbReference type="PDBsum" id="5CBE"/>
<dbReference type="PDBsum" id="6VGJ"/>
<dbReference type="PDBsum" id="7JNY"/>
<dbReference type="SMR" id="O43927"/>
<dbReference type="BioGRID" id="115814">
    <property type="interactions" value="13"/>
</dbReference>
<dbReference type="DIP" id="DIP-5914N"/>
<dbReference type="FunCoup" id="O43927">
    <property type="interactions" value="737"/>
</dbReference>
<dbReference type="IntAct" id="O43927">
    <property type="interactions" value="10"/>
</dbReference>
<dbReference type="MINT" id="O43927"/>
<dbReference type="STRING" id="9606.ENSP00000286758"/>
<dbReference type="iPTMnet" id="O43927"/>
<dbReference type="PhosphoSitePlus" id="O43927"/>
<dbReference type="BioMuta" id="CXCL13"/>
<dbReference type="CPTAC" id="CPTAC-5936"/>
<dbReference type="MassIVE" id="O43927"/>
<dbReference type="PaxDb" id="9606-ENSP00000286758"/>
<dbReference type="PeptideAtlas" id="O43927"/>
<dbReference type="ProteomicsDB" id="49240"/>
<dbReference type="ABCD" id="O43927">
    <property type="antibodies" value="4 sequenced antibodies"/>
</dbReference>
<dbReference type="Antibodypedia" id="13544">
    <property type="antibodies" value="591 antibodies from 40 providers"/>
</dbReference>
<dbReference type="CPTC" id="O43927">
    <property type="antibodies" value="1 antibody"/>
</dbReference>
<dbReference type="DNASU" id="10563"/>
<dbReference type="Ensembl" id="ENST00000286758.4">
    <property type="protein sequence ID" value="ENSP00000286758.4"/>
    <property type="gene ID" value="ENSG00000156234.8"/>
</dbReference>
<dbReference type="Ensembl" id="ENST00000682537.1">
    <property type="protein sequence ID" value="ENSP00000507688.1"/>
    <property type="gene ID" value="ENSG00000156234.8"/>
</dbReference>
<dbReference type="GeneID" id="10563"/>
<dbReference type="KEGG" id="hsa:10563"/>
<dbReference type="MANE-Select" id="ENST00000682537.1">
    <property type="protein sequence ID" value="ENSP00000507688.1"/>
    <property type="RefSeq nucleotide sequence ID" value="NM_001371558.1"/>
    <property type="RefSeq protein sequence ID" value="NP_001358487.1"/>
</dbReference>
<dbReference type="AGR" id="HGNC:10639"/>
<dbReference type="CTD" id="10563"/>
<dbReference type="DisGeNET" id="10563"/>
<dbReference type="GeneCards" id="CXCL13"/>
<dbReference type="HGNC" id="HGNC:10639">
    <property type="gene designation" value="CXCL13"/>
</dbReference>
<dbReference type="HPA" id="ENSG00000156234">
    <property type="expression patterns" value="Tissue enriched (lymphoid)"/>
</dbReference>
<dbReference type="MIM" id="605149">
    <property type="type" value="gene"/>
</dbReference>
<dbReference type="neXtProt" id="NX_O43927"/>
<dbReference type="OpenTargets" id="ENSG00000156234"/>
<dbReference type="PharmGKB" id="PA35570"/>
<dbReference type="VEuPathDB" id="HostDB:ENSG00000156234"/>
<dbReference type="eggNOG" id="ENOG502SEXJ">
    <property type="taxonomic scope" value="Eukaryota"/>
</dbReference>
<dbReference type="GeneTree" id="ENSGT00530000064292"/>
<dbReference type="HOGENOM" id="CLU_143902_2_0_1"/>
<dbReference type="InParanoid" id="O43927"/>
<dbReference type="OMA" id="NCRCVKT"/>
<dbReference type="OrthoDB" id="9937393at2759"/>
<dbReference type="PAN-GO" id="O43927">
    <property type="GO annotations" value="8 GO annotations based on evolutionary models"/>
</dbReference>
<dbReference type="PhylomeDB" id="O43927"/>
<dbReference type="TreeFam" id="TF335204"/>
<dbReference type="PathwayCommons" id="O43927"/>
<dbReference type="Reactome" id="R-HSA-380108">
    <property type="pathway name" value="Chemokine receptors bind chemokines"/>
</dbReference>
<dbReference type="Reactome" id="R-HSA-418594">
    <property type="pathway name" value="G alpha (i) signalling events"/>
</dbReference>
<dbReference type="SignaLink" id="O43927"/>
<dbReference type="BioGRID-ORCS" id="10563">
    <property type="hits" value="11 hits in 1131 CRISPR screens"/>
</dbReference>
<dbReference type="ChiTaRS" id="CXCL13">
    <property type="organism name" value="human"/>
</dbReference>
<dbReference type="EvolutionaryTrace" id="O43927"/>
<dbReference type="GeneWiki" id="CXCL13"/>
<dbReference type="GenomeRNAi" id="10563"/>
<dbReference type="Pharos" id="O43927">
    <property type="development level" value="Tbio"/>
</dbReference>
<dbReference type="PRO" id="PR:O43927"/>
<dbReference type="Proteomes" id="UP000005640">
    <property type="component" value="Chromosome 4"/>
</dbReference>
<dbReference type="RNAct" id="O43927">
    <property type="molecule type" value="protein"/>
</dbReference>
<dbReference type="Bgee" id="ENSG00000156234">
    <property type="expression patterns" value="Expressed in spleen and 133 other cell types or tissues"/>
</dbReference>
<dbReference type="ExpressionAtlas" id="O43927">
    <property type="expression patterns" value="baseline and differential"/>
</dbReference>
<dbReference type="GO" id="GO:0005576">
    <property type="term" value="C:extracellular region"/>
    <property type="evidence" value="ECO:0000314"/>
    <property type="project" value="BHF-UCL"/>
</dbReference>
<dbReference type="GO" id="GO:0005615">
    <property type="term" value="C:extracellular space"/>
    <property type="evidence" value="ECO:0000318"/>
    <property type="project" value="GO_Central"/>
</dbReference>
<dbReference type="GO" id="GO:0031735">
    <property type="term" value="F:CCR10 chemokine receptor binding"/>
    <property type="evidence" value="ECO:0000314"/>
    <property type="project" value="BHF-UCL"/>
</dbReference>
<dbReference type="GO" id="GO:0008009">
    <property type="term" value="F:chemokine activity"/>
    <property type="evidence" value="ECO:0000314"/>
    <property type="project" value="BHF-UCL"/>
</dbReference>
<dbReference type="GO" id="GO:0045236">
    <property type="term" value="F:CXCR chemokine receptor binding"/>
    <property type="evidence" value="ECO:0000318"/>
    <property type="project" value="GO_Central"/>
</dbReference>
<dbReference type="GO" id="GO:0048248">
    <property type="term" value="F:CXCR3 chemokine receptor binding"/>
    <property type="evidence" value="ECO:0000353"/>
    <property type="project" value="BHF-UCL"/>
</dbReference>
<dbReference type="GO" id="GO:0031724">
    <property type="term" value="F:CXCR5 chemokine receptor binding"/>
    <property type="evidence" value="ECO:0000314"/>
    <property type="project" value="BHF-UCL"/>
</dbReference>
<dbReference type="GO" id="GO:0017134">
    <property type="term" value="F:fibroblast growth factor binding"/>
    <property type="evidence" value="ECO:0000314"/>
    <property type="project" value="BHF-UCL"/>
</dbReference>
<dbReference type="GO" id="GO:0008201">
    <property type="term" value="F:heparin binding"/>
    <property type="evidence" value="ECO:0000314"/>
    <property type="project" value="BHF-UCL"/>
</dbReference>
<dbReference type="GO" id="GO:0048018">
    <property type="term" value="F:receptor ligand activity"/>
    <property type="evidence" value="ECO:0000314"/>
    <property type="project" value="BHF-UCL"/>
</dbReference>
<dbReference type="GO" id="GO:0061844">
    <property type="term" value="P:antimicrobial humoral immune response mediated by antimicrobial peptide"/>
    <property type="evidence" value="ECO:0000318"/>
    <property type="project" value="GO_Central"/>
</dbReference>
<dbReference type="GO" id="GO:0035754">
    <property type="term" value="P:B cell chemotaxis"/>
    <property type="evidence" value="ECO:0000314"/>
    <property type="project" value="BHF-UCL"/>
</dbReference>
<dbReference type="GO" id="GO:0007166">
    <property type="term" value="P:cell surface receptor signaling pathway"/>
    <property type="evidence" value="ECO:0000314"/>
    <property type="project" value="BHF-UCL"/>
</dbReference>
<dbReference type="GO" id="GO:0007267">
    <property type="term" value="P:cell-cell signaling"/>
    <property type="evidence" value="ECO:0000314"/>
    <property type="project" value="BHF-UCL"/>
</dbReference>
<dbReference type="GO" id="GO:0071222">
    <property type="term" value="P:cellular response to lipopolysaccharide"/>
    <property type="evidence" value="ECO:0000318"/>
    <property type="project" value="GO_Central"/>
</dbReference>
<dbReference type="GO" id="GO:0070098">
    <property type="term" value="P:chemokine-mediated signaling pathway"/>
    <property type="evidence" value="ECO:0000250"/>
    <property type="project" value="ARUK-UCL"/>
</dbReference>
<dbReference type="GO" id="GO:0002544">
    <property type="term" value="P:chronic inflammatory response"/>
    <property type="evidence" value="ECO:0000303"/>
    <property type="project" value="BHF-UCL"/>
</dbReference>
<dbReference type="GO" id="GO:0042742">
    <property type="term" value="P:defense response to bacterium"/>
    <property type="evidence" value="ECO:0000314"/>
    <property type="project" value="BHF-UCL"/>
</dbReference>
<dbReference type="GO" id="GO:0035768">
    <property type="term" value="P:endothelial cell chemotaxis to fibroblast growth factor"/>
    <property type="evidence" value="ECO:0000314"/>
    <property type="project" value="BHF-UCL"/>
</dbReference>
<dbReference type="GO" id="GO:0002467">
    <property type="term" value="P:germinal center formation"/>
    <property type="evidence" value="ECO:0000303"/>
    <property type="project" value="BHF-UCL"/>
</dbReference>
<dbReference type="GO" id="GO:0006955">
    <property type="term" value="P:immune response"/>
    <property type="evidence" value="ECO:0000305"/>
    <property type="project" value="BHF-UCL"/>
</dbReference>
<dbReference type="GO" id="GO:0006954">
    <property type="term" value="P:inflammatory response"/>
    <property type="evidence" value="ECO:0000318"/>
    <property type="project" value="GO_Central"/>
</dbReference>
<dbReference type="GO" id="GO:0002518">
    <property type="term" value="P:lymphocyte chemotaxis across high endothelial venule"/>
    <property type="evidence" value="ECO:0000250"/>
    <property type="project" value="BHF-UCL"/>
</dbReference>
<dbReference type="GO" id="GO:2000545">
    <property type="term" value="P:negative regulation of endothelial cell chemotaxis to fibroblast growth factor"/>
    <property type="evidence" value="ECO:0000314"/>
    <property type="project" value="BHF-UCL"/>
</dbReference>
<dbReference type="GO" id="GO:0030593">
    <property type="term" value="P:neutrophil chemotaxis"/>
    <property type="evidence" value="ECO:0000318"/>
    <property type="project" value="GO_Central"/>
</dbReference>
<dbReference type="GO" id="GO:0033634">
    <property type="term" value="P:positive regulation of cell-cell adhesion mediated by integrin"/>
    <property type="evidence" value="ECO:0000250"/>
    <property type="project" value="BHF-UCL"/>
</dbReference>
<dbReference type="GO" id="GO:0007204">
    <property type="term" value="P:positive regulation of cytosolic calcium ion concentration"/>
    <property type="evidence" value="ECO:0000314"/>
    <property type="project" value="BHF-UCL"/>
</dbReference>
<dbReference type="GO" id="GO:0033625">
    <property type="term" value="P:positive regulation of integrin activation"/>
    <property type="evidence" value="ECO:0000250"/>
    <property type="project" value="BHF-UCL"/>
</dbReference>
<dbReference type="GO" id="GO:0010820">
    <property type="term" value="P:positive regulation of T cell chemotaxis"/>
    <property type="evidence" value="ECO:0000314"/>
    <property type="project" value="BHF-UCL"/>
</dbReference>
<dbReference type="GO" id="GO:0045765">
    <property type="term" value="P:regulation of angiogenesis"/>
    <property type="evidence" value="ECO:0000303"/>
    <property type="project" value="BHF-UCL"/>
</dbReference>
<dbReference type="GO" id="GO:0002920">
    <property type="term" value="P:regulation of humoral immune response"/>
    <property type="evidence" value="ECO:0000303"/>
    <property type="project" value="BHF-UCL"/>
</dbReference>
<dbReference type="GO" id="GO:0032487">
    <property type="term" value="P:regulation of Rap protein signal transduction"/>
    <property type="evidence" value="ECO:0000250"/>
    <property type="project" value="BHF-UCL"/>
</dbReference>
<dbReference type="CDD" id="cd00273">
    <property type="entry name" value="Chemokine_CXC"/>
    <property type="match status" value="1"/>
</dbReference>
<dbReference type="FunFam" id="2.40.50.40:FF:000004">
    <property type="entry name" value="C-X-C motif chemokine"/>
    <property type="match status" value="1"/>
</dbReference>
<dbReference type="Gene3D" id="2.40.50.40">
    <property type="match status" value="1"/>
</dbReference>
<dbReference type="InterPro" id="IPR039809">
    <property type="entry name" value="Chemokine_b/g/d"/>
</dbReference>
<dbReference type="InterPro" id="IPR001089">
    <property type="entry name" value="Chemokine_CXC"/>
</dbReference>
<dbReference type="InterPro" id="IPR018048">
    <property type="entry name" value="Chemokine_CXC_CS"/>
</dbReference>
<dbReference type="InterPro" id="IPR001811">
    <property type="entry name" value="Chemokine_IL8-like_dom"/>
</dbReference>
<dbReference type="InterPro" id="IPR033899">
    <property type="entry name" value="CXC_Chemokine_domain"/>
</dbReference>
<dbReference type="InterPro" id="IPR036048">
    <property type="entry name" value="Interleukin_8-like_sf"/>
</dbReference>
<dbReference type="PANTHER" id="PTHR12015:SF204">
    <property type="entry name" value="C-X-C MOTIF CHEMOKINE 13"/>
    <property type="match status" value="1"/>
</dbReference>
<dbReference type="PANTHER" id="PTHR12015">
    <property type="entry name" value="SMALL INDUCIBLE CYTOKINE A"/>
    <property type="match status" value="1"/>
</dbReference>
<dbReference type="Pfam" id="PF00048">
    <property type="entry name" value="IL8"/>
    <property type="match status" value="1"/>
</dbReference>
<dbReference type="PRINTS" id="PR00436">
    <property type="entry name" value="INTERLEUKIN8"/>
</dbReference>
<dbReference type="PRINTS" id="PR00437">
    <property type="entry name" value="SMALLCYTKCXC"/>
</dbReference>
<dbReference type="SMART" id="SM00199">
    <property type="entry name" value="SCY"/>
    <property type="match status" value="1"/>
</dbReference>
<dbReference type="SUPFAM" id="SSF54117">
    <property type="entry name" value="Interleukin 8-like chemokines"/>
    <property type="match status" value="1"/>
</dbReference>
<dbReference type="PROSITE" id="PS00471">
    <property type="entry name" value="SMALL_CYTOKINES_CXC"/>
    <property type="match status" value="1"/>
</dbReference>